<proteinExistence type="inferred from homology"/>
<protein>
    <recommendedName>
        <fullName evidence="1">Ribulose bisphosphate carboxylase large chain</fullName>
        <shortName evidence="1">RuBisCO large subunit</shortName>
        <ecNumber evidence="1">4.1.1.39</ecNumber>
    </recommendedName>
</protein>
<keyword id="KW-0113">Calvin cycle</keyword>
<keyword id="KW-0120">Carbon dioxide fixation</keyword>
<keyword id="KW-0150">Chloroplast</keyword>
<keyword id="KW-1015">Disulfide bond</keyword>
<keyword id="KW-0456">Lyase</keyword>
<keyword id="KW-0460">Magnesium</keyword>
<keyword id="KW-0479">Metal-binding</keyword>
<keyword id="KW-0488">Methylation</keyword>
<keyword id="KW-0503">Monooxygenase</keyword>
<keyword id="KW-0560">Oxidoreductase</keyword>
<keyword id="KW-0601">Photorespiration</keyword>
<keyword id="KW-0602">Photosynthesis</keyword>
<keyword id="KW-0934">Plastid</keyword>
<comment type="function">
    <text evidence="1">RuBisCO catalyzes two reactions: the carboxylation of D-ribulose 1,5-bisphosphate, the primary event in carbon dioxide fixation, as well as the oxidative fragmentation of the pentose substrate in the photorespiration process. Both reactions occur simultaneously and in competition at the same active site.</text>
</comment>
<comment type="catalytic activity">
    <reaction evidence="1">
        <text>2 (2R)-3-phosphoglycerate + 2 H(+) = D-ribulose 1,5-bisphosphate + CO2 + H2O</text>
        <dbReference type="Rhea" id="RHEA:23124"/>
        <dbReference type="ChEBI" id="CHEBI:15377"/>
        <dbReference type="ChEBI" id="CHEBI:15378"/>
        <dbReference type="ChEBI" id="CHEBI:16526"/>
        <dbReference type="ChEBI" id="CHEBI:57870"/>
        <dbReference type="ChEBI" id="CHEBI:58272"/>
        <dbReference type="EC" id="4.1.1.39"/>
    </reaction>
</comment>
<comment type="catalytic activity">
    <reaction evidence="1">
        <text>D-ribulose 1,5-bisphosphate + O2 = 2-phosphoglycolate + (2R)-3-phosphoglycerate + 2 H(+)</text>
        <dbReference type="Rhea" id="RHEA:36631"/>
        <dbReference type="ChEBI" id="CHEBI:15378"/>
        <dbReference type="ChEBI" id="CHEBI:15379"/>
        <dbReference type="ChEBI" id="CHEBI:57870"/>
        <dbReference type="ChEBI" id="CHEBI:58033"/>
        <dbReference type="ChEBI" id="CHEBI:58272"/>
    </reaction>
</comment>
<comment type="cofactor">
    <cofactor evidence="1">
        <name>Mg(2+)</name>
        <dbReference type="ChEBI" id="CHEBI:18420"/>
    </cofactor>
    <text evidence="1">Binds 1 Mg(2+) ion per subunit.</text>
</comment>
<comment type="subunit">
    <text evidence="1">Heterohexadecamer of 8 large chains and 8 small chains; disulfide-linked. The disulfide link is formed within the large subunit homodimers.</text>
</comment>
<comment type="subcellular location">
    <subcellularLocation>
        <location>Plastid</location>
        <location>Chloroplast</location>
    </subcellularLocation>
</comment>
<comment type="PTM">
    <text evidence="1">The disulfide bond which can form in the large chain dimeric partners within the hexadecamer appears to be associated with oxidative stress and protein turnover.</text>
</comment>
<comment type="miscellaneous">
    <text evidence="1">The basic functional RuBisCO is composed of a large chain homodimer in a 'head-to-tail' conformation. In form I RuBisCO this homodimer is arranged in a barrel-like tetramer with the small subunits forming a tetrameric 'cap' on each end of the 'barrel'.</text>
</comment>
<comment type="similarity">
    <text evidence="1">Belongs to the RuBisCO large chain family. Type I subfamily.</text>
</comment>
<feature type="chain" id="PRO_0000062394" description="Ribulose bisphosphate carboxylase large chain">
    <location>
        <begin position="1" status="less than"/>
        <end position="447" status="greater than"/>
    </location>
</feature>
<feature type="active site" description="Proton acceptor" evidence="1">
    <location>
        <position position="166"/>
    </location>
</feature>
<feature type="active site" description="Proton acceptor" evidence="1">
    <location>
        <position position="285"/>
    </location>
</feature>
<feature type="binding site" description="in homodimeric partner" evidence="1">
    <location>
        <position position="114"/>
    </location>
    <ligand>
        <name>substrate</name>
    </ligand>
</feature>
<feature type="binding site" evidence="1">
    <location>
        <position position="164"/>
    </location>
    <ligand>
        <name>substrate</name>
    </ligand>
</feature>
<feature type="binding site" evidence="1">
    <location>
        <position position="168"/>
    </location>
    <ligand>
        <name>substrate</name>
    </ligand>
</feature>
<feature type="binding site" description="via carbamate group" evidence="1">
    <location>
        <position position="192"/>
    </location>
    <ligand>
        <name>Mg(2+)</name>
        <dbReference type="ChEBI" id="CHEBI:18420"/>
    </ligand>
</feature>
<feature type="binding site" evidence="1">
    <location>
        <position position="194"/>
    </location>
    <ligand>
        <name>Mg(2+)</name>
        <dbReference type="ChEBI" id="CHEBI:18420"/>
    </ligand>
</feature>
<feature type="binding site" evidence="1">
    <location>
        <position position="195"/>
    </location>
    <ligand>
        <name>Mg(2+)</name>
        <dbReference type="ChEBI" id="CHEBI:18420"/>
    </ligand>
</feature>
<feature type="binding site" evidence="1">
    <location>
        <position position="286"/>
    </location>
    <ligand>
        <name>substrate</name>
    </ligand>
</feature>
<feature type="binding site" evidence="1">
    <location>
        <position position="318"/>
    </location>
    <ligand>
        <name>substrate</name>
    </ligand>
</feature>
<feature type="binding site" evidence="1">
    <location>
        <position position="370"/>
    </location>
    <ligand>
        <name>substrate</name>
    </ligand>
</feature>
<feature type="site" description="Transition state stabilizer" evidence="1">
    <location>
        <position position="325"/>
    </location>
</feature>
<feature type="modified residue" description="N6,N6,N6-trimethyllysine" evidence="1">
    <location>
        <position position="5"/>
    </location>
</feature>
<feature type="modified residue" description="N6-carboxylysine" evidence="1">
    <location>
        <position position="192"/>
    </location>
</feature>
<feature type="disulfide bond" description="Interchain; in linked form" evidence="1">
    <location>
        <position position="238"/>
    </location>
</feature>
<feature type="non-terminal residue">
    <location>
        <position position="1"/>
    </location>
</feature>
<feature type="non-terminal residue">
    <location>
        <position position="447"/>
    </location>
</feature>
<gene>
    <name evidence="1" type="primary">rbcL</name>
</gene>
<dbReference type="EC" id="4.1.1.39" evidence="1"/>
<dbReference type="EMBL" id="Z69238">
    <property type="protein sequence ID" value="CAA93209.1"/>
    <property type="molecule type" value="Genomic_DNA"/>
</dbReference>
<dbReference type="SMR" id="Q95694"/>
<dbReference type="GO" id="GO:0009507">
    <property type="term" value="C:chloroplast"/>
    <property type="evidence" value="ECO:0007669"/>
    <property type="project" value="UniProtKB-SubCell"/>
</dbReference>
<dbReference type="GO" id="GO:0000287">
    <property type="term" value="F:magnesium ion binding"/>
    <property type="evidence" value="ECO:0007669"/>
    <property type="project" value="InterPro"/>
</dbReference>
<dbReference type="GO" id="GO:0004497">
    <property type="term" value="F:monooxygenase activity"/>
    <property type="evidence" value="ECO:0007669"/>
    <property type="project" value="UniProtKB-KW"/>
</dbReference>
<dbReference type="GO" id="GO:0016984">
    <property type="term" value="F:ribulose-bisphosphate carboxylase activity"/>
    <property type="evidence" value="ECO:0007669"/>
    <property type="project" value="UniProtKB-EC"/>
</dbReference>
<dbReference type="GO" id="GO:0009853">
    <property type="term" value="P:photorespiration"/>
    <property type="evidence" value="ECO:0007669"/>
    <property type="project" value="UniProtKB-KW"/>
</dbReference>
<dbReference type="GO" id="GO:0019253">
    <property type="term" value="P:reductive pentose-phosphate cycle"/>
    <property type="evidence" value="ECO:0007669"/>
    <property type="project" value="UniProtKB-KW"/>
</dbReference>
<dbReference type="CDD" id="cd08212">
    <property type="entry name" value="RuBisCO_large_I"/>
    <property type="match status" value="1"/>
</dbReference>
<dbReference type="FunFam" id="3.20.20.110:FF:000001">
    <property type="entry name" value="Ribulose bisphosphate carboxylase large chain"/>
    <property type="match status" value="1"/>
</dbReference>
<dbReference type="FunFam" id="3.30.70.150:FF:000001">
    <property type="entry name" value="Ribulose bisphosphate carboxylase large chain"/>
    <property type="match status" value="1"/>
</dbReference>
<dbReference type="Gene3D" id="3.20.20.110">
    <property type="entry name" value="Ribulose bisphosphate carboxylase, large subunit, C-terminal domain"/>
    <property type="match status" value="1"/>
</dbReference>
<dbReference type="Gene3D" id="3.30.70.150">
    <property type="entry name" value="RuBisCO large subunit, N-terminal domain"/>
    <property type="match status" value="1"/>
</dbReference>
<dbReference type="HAMAP" id="MF_01338">
    <property type="entry name" value="RuBisCO_L_type1"/>
    <property type="match status" value="1"/>
</dbReference>
<dbReference type="InterPro" id="IPR033966">
    <property type="entry name" value="RuBisCO"/>
</dbReference>
<dbReference type="InterPro" id="IPR020878">
    <property type="entry name" value="RuBisCo_large_chain_AS"/>
</dbReference>
<dbReference type="InterPro" id="IPR000685">
    <property type="entry name" value="RuBisCO_lsu_C"/>
</dbReference>
<dbReference type="InterPro" id="IPR036376">
    <property type="entry name" value="RuBisCO_lsu_C_sf"/>
</dbReference>
<dbReference type="InterPro" id="IPR017443">
    <property type="entry name" value="RuBisCO_lsu_fd_N"/>
</dbReference>
<dbReference type="InterPro" id="IPR036422">
    <property type="entry name" value="RuBisCO_lsu_N_sf"/>
</dbReference>
<dbReference type="InterPro" id="IPR020888">
    <property type="entry name" value="RuBisCO_lsuI"/>
</dbReference>
<dbReference type="NCBIfam" id="NF003252">
    <property type="entry name" value="PRK04208.1"/>
    <property type="match status" value="1"/>
</dbReference>
<dbReference type="PANTHER" id="PTHR42704">
    <property type="entry name" value="RIBULOSE BISPHOSPHATE CARBOXYLASE"/>
    <property type="match status" value="1"/>
</dbReference>
<dbReference type="PANTHER" id="PTHR42704:SF15">
    <property type="entry name" value="RIBULOSE BISPHOSPHATE CARBOXYLASE LARGE CHAIN"/>
    <property type="match status" value="1"/>
</dbReference>
<dbReference type="Pfam" id="PF00016">
    <property type="entry name" value="RuBisCO_large"/>
    <property type="match status" value="1"/>
</dbReference>
<dbReference type="Pfam" id="PF02788">
    <property type="entry name" value="RuBisCO_large_N"/>
    <property type="match status" value="1"/>
</dbReference>
<dbReference type="SFLD" id="SFLDG01052">
    <property type="entry name" value="RuBisCO"/>
    <property type="match status" value="1"/>
</dbReference>
<dbReference type="SFLD" id="SFLDS00014">
    <property type="entry name" value="RuBisCO"/>
    <property type="match status" value="1"/>
</dbReference>
<dbReference type="SFLD" id="SFLDG00301">
    <property type="entry name" value="RuBisCO-like_proteins"/>
    <property type="match status" value="1"/>
</dbReference>
<dbReference type="SUPFAM" id="SSF51649">
    <property type="entry name" value="RuBisCo, C-terminal domain"/>
    <property type="match status" value="1"/>
</dbReference>
<dbReference type="SUPFAM" id="SSF54966">
    <property type="entry name" value="RuBisCO, large subunit, small (N-terminal) domain"/>
    <property type="match status" value="1"/>
</dbReference>
<dbReference type="PROSITE" id="PS00157">
    <property type="entry name" value="RUBISCO_LARGE"/>
    <property type="match status" value="1"/>
</dbReference>
<name>RBL_CAMLE</name>
<geneLocation type="chloroplast"/>
<organism>
    <name type="scientific">Camassia leichtlinii</name>
    <name type="common">Western quamash</name>
    <name type="synonym">Chlorogalum leichtlinii</name>
    <dbReference type="NCBI Taxonomy" id="49707"/>
    <lineage>
        <taxon>Eukaryota</taxon>
        <taxon>Viridiplantae</taxon>
        <taxon>Streptophyta</taxon>
        <taxon>Embryophyta</taxon>
        <taxon>Tracheophyta</taxon>
        <taxon>Spermatophyta</taxon>
        <taxon>Magnoliopsida</taxon>
        <taxon>Liliopsida</taxon>
        <taxon>Asparagales</taxon>
        <taxon>Asparagaceae</taxon>
        <taxon>Agavoideae</taxon>
        <taxon>Camassia</taxon>
    </lineage>
</organism>
<accession>Q95694</accession>
<evidence type="ECO:0000255" key="1">
    <source>
        <dbReference type="HAMAP-Rule" id="MF_01338"/>
    </source>
</evidence>
<sequence length="447" mass="49507">SVGFKAGVKDYRLTYYTPDYETKDTDILAAFRVTPQPGVPPEEAGAAVAAESSTGTWTTVWTDGLTSLDRYKGRCYHIEAVVGEENQFIAYVAYPLDLFEEGSVTNMFTSIVGNVFGFKALRALRLEDLRIPPAYSKTFQGPPHGIQVERDKLNKYGRPLLGCTIKPKLGLSAKNYGRAVYECLRGGLDFTKDDENVNSQPFMRWRDRFLFCAEAIYKAQAETGEIKGHYLNATAGTCEEMIKRAIFARELGVPIVMHDYLTGGFTANTSLAHYCRDNGLLLHIHRAMHAVIDRQKNHGMHFRVLAKALRMSGGDHIHAGTVVGKLEGEREMTLGFVDLLRDDFIEKDRSRGIFFTQDWVSMPGVIPVASGGIHVWHMPALTEIFGDDSVLQFGGGTLGHPWGNAPGAVANRVALEACVQARNEGRDLAQEGNEIIREACKWSPELA</sequence>
<reference key="1">
    <citation type="submission" date="1996-01" db="EMBL/GenBank/DDBJ databases">
        <authorList>
            <person name="Fay M.F."/>
            <person name="Chase M.W."/>
        </authorList>
    </citation>
    <scope>NUCLEOTIDE SEQUENCE [GENOMIC DNA]</scope>
</reference>